<protein>
    <recommendedName>
        <fullName>Histone promoter control protein 2</fullName>
    </recommendedName>
</protein>
<sequence>MDQKAIVLDNSKSGSKQTKSSGKMQTQTDTNAEVLNTDNSIKKETGSDSEDLFNKFSNKKTNRKIPNIAEELAKNRNYVKGASPSPIIISGSSSTSPSGPSSSSTNPMGIPTNRFNKNTVELYQHSPSPVMTTNKTDTEEKRQNNRNMDNKNTPERGSSSFAAKQLKISSLLTISSNEDSKTLHINDTNGNKNSNAASNNIPSAYAELHTEGNSIESLIKPPSSPRNKSLTPKVILPTQNMDGTIAKDPHLGDNTPGILIAKTSSPVNLDVESTAQSLGKFNKSTNSLKAALTKAPAEKVSLKRSISSVTNSDSNISSSKKPTSEKAKKSSSASAILPKPTTTKTSKKAASNSSDSTRKKNASNKTTSAIKKESNAGSKLNTVKKENSSLSSIKATEKEKDKGGNSTEAKNSTSNVRKEPTAKSPKRLVAAPTVSPPKILQTAETKAKEPSILIDVPLYQADTNDYLDENGQVIFNLSTLIKEKYHPKSKELAQLKDSKRNLLMQLSDHSNGSLEKEKDEEGDVIELDDDEDMEEDEGEIDTETNTVTTTISPKKKSHPMKGKNLIGKYDVEDPFIDDSELLWEEQRAATKDGFFVYFGPLIEKGHYASLERANGTMKRGGVKNK</sequence>
<name>HPC2_YEAST</name>
<reference key="1">
    <citation type="journal article" date="1992" name="Mol. Cell. Biol.">
        <title>Identification of a new set of cell cycle-regulatory genes that regulate S-phase transcription of histone genes in Saccharomyces cerevisiae.</title>
        <authorList>
            <person name="Xu H."/>
            <person name="Kim U.J."/>
            <person name="Schuster T."/>
            <person name="Grunstein M."/>
        </authorList>
    </citation>
    <scope>NUCLEOTIDE SEQUENCE [GENOMIC DNA]</scope>
</reference>
<reference key="2">
    <citation type="journal article" date="1994" name="EMBO J.">
        <title>Complete DNA sequence of yeast chromosome II.</title>
        <authorList>
            <person name="Feldmann H."/>
            <person name="Aigle M."/>
            <person name="Aljinovic G."/>
            <person name="Andre B."/>
            <person name="Baclet M.C."/>
            <person name="Barthe C."/>
            <person name="Baur A."/>
            <person name="Becam A.-M."/>
            <person name="Biteau N."/>
            <person name="Boles E."/>
            <person name="Brandt T."/>
            <person name="Brendel M."/>
            <person name="Brueckner M."/>
            <person name="Bussereau F."/>
            <person name="Christiansen C."/>
            <person name="Contreras R."/>
            <person name="Crouzet M."/>
            <person name="Cziepluch C."/>
            <person name="Demolis N."/>
            <person name="Delaveau T."/>
            <person name="Doignon F."/>
            <person name="Domdey H."/>
            <person name="Duesterhus S."/>
            <person name="Dubois E."/>
            <person name="Dujon B."/>
            <person name="El Bakkoury M."/>
            <person name="Entian K.-D."/>
            <person name="Feuermann M."/>
            <person name="Fiers W."/>
            <person name="Fobo G.M."/>
            <person name="Fritz C."/>
            <person name="Gassenhuber J."/>
            <person name="Glansdorff N."/>
            <person name="Goffeau A."/>
            <person name="Grivell L.A."/>
            <person name="de Haan M."/>
            <person name="Hein C."/>
            <person name="Herbert C.J."/>
            <person name="Hollenberg C.P."/>
            <person name="Holmstroem K."/>
            <person name="Jacq C."/>
            <person name="Jacquet M."/>
            <person name="Jauniaux J.-C."/>
            <person name="Jonniaux J.-L."/>
            <person name="Kallesoee T."/>
            <person name="Kiesau P."/>
            <person name="Kirchrath L."/>
            <person name="Koetter P."/>
            <person name="Korol S."/>
            <person name="Liebl S."/>
            <person name="Logghe M."/>
            <person name="Lohan A.J.E."/>
            <person name="Louis E.J."/>
            <person name="Li Z.Y."/>
            <person name="Maat M.J."/>
            <person name="Mallet L."/>
            <person name="Mannhaupt G."/>
            <person name="Messenguy F."/>
            <person name="Miosga T."/>
            <person name="Molemans F."/>
            <person name="Mueller S."/>
            <person name="Nasr F."/>
            <person name="Obermaier B."/>
            <person name="Perea J."/>
            <person name="Pierard A."/>
            <person name="Piravandi E."/>
            <person name="Pohl F.M."/>
            <person name="Pohl T.M."/>
            <person name="Potier S."/>
            <person name="Proft M."/>
            <person name="Purnelle B."/>
            <person name="Ramezani Rad M."/>
            <person name="Rieger M."/>
            <person name="Rose M."/>
            <person name="Schaaff-Gerstenschlaeger I."/>
            <person name="Scherens B."/>
            <person name="Schwarzlose C."/>
            <person name="Skala J."/>
            <person name="Slonimski P.P."/>
            <person name="Smits P.H.M."/>
            <person name="Souciet J.-L."/>
            <person name="Steensma H.Y."/>
            <person name="Stucka R."/>
            <person name="Urrestarazu L.A."/>
            <person name="van der Aart Q.J.M."/>
            <person name="Van Dyck L."/>
            <person name="Vassarotti A."/>
            <person name="Vetter I."/>
            <person name="Vierendeels F."/>
            <person name="Vissers S."/>
            <person name="Wagner G."/>
            <person name="de Wergifosse P."/>
            <person name="Wolfe K.H."/>
            <person name="Zagulski M."/>
            <person name="Zimmermann F.K."/>
            <person name="Mewes H.-W."/>
            <person name="Kleine K."/>
        </authorList>
    </citation>
    <scope>NUCLEOTIDE SEQUENCE [LARGE SCALE GENOMIC DNA]</scope>
    <source>
        <strain>ATCC 204508 / S288c</strain>
    </source>
</reference>
<reference key="3">
    <citation type="journal article" date="2014" name="G3 (Bethesda)">
        <title>The reference genome sequence of Saccharomyces cerevisiae: Then and now.</title>
        <authorList>
            <person name="Engel S.R."/>
            <person name="Dietrich F.S."/>
            <person name="Fisk D.G."/>
            <person name="Binkley G."/>
            <person name="Balakrishnan R."/>
            <person name="Costanzo M.C."/>
            <person name="Dwight S.S."/>
            <person name="Hitz B.C."/>
            <person name="Karra K."/>
            <person name="Nash R.S."/>
            <person name="Weng S."/>
            <person name="Wong E.D."/>
            <person name="Lloyd P."/>
            <person name="Skrzypek M.S."/>
            <person name="Miyasato S.R."/>
            <person name="Simison M."/>
            <person name="Cherry J.M."/>
        </authorList>
    </citation>
    <scope>GENOME REANNOTATION</scope>
    <source>
        <strain>ATCC 204508 / S288c</strain>
    </source>
</reference>
<reference key="4">
    <citation type="journal article" date="2007" name="Proc. Natl. Acad. Sci. U.S.A.">
        <title>High-density yeast-tiling array reveals previously undiscovered introns and extensive regulation of meiotic splicing.</title>
        <authorList>
            <person name="Juneau K."/>
            <person name="Palm C."/>
            <person name="Miranda M."/>
            <person name="Davis R.W."/>
        </authorList>
    </citation>
    <scope>NUCLEOTIDE SEQUENCE [MRNA] OF 1-83</scope>
    <source>
        <strain>ATCC 201390 / BY4743</strain>
    </source>
</reference>
<reference key="5">
    <citation type="journal article" date="2003" name="Nature">
        <title>Global analysis of protein localization in budding yeast.</title>
        <authorList>
            <person name="Huh W.-K."/>
            <person name="Falvo J.V."/>
            <person name="Gerke L.C."/>
            <person name="Carroll A.S."/>
            <person name="Howson R.W."/>
            <person name="Weissman J.S."/>
            <person name="O'Shea E.K."/>
        </authorList>
    </citation>
    <scope>SUBCELLULAR LOCATION [LARGE SCALE ANALYSIS]</scope>
</reference>
<reference key="6">
    <citation type="journal article" date="2002" name="Genetics">
        <title>Defects in SPT16 or POB3 (yFACT) in Saccharomyces cerevisiae cause dependence on the Hir/Hpc pathway: polymerase passage may degrade chromatin structure.</title>
        <authorList>
            <person name="Formosa T."/>
            <person name="Ruone S."/>
            <person name="Adams M.D."/>
            <person name="Olsen A.E."/>
            <person name="Eriksson P."/>
            <person name="Yu Y."/>
            <person name="Rhoades A.R."/>
            <person name="Kaufman P.D."/>
            <person name="Stillman D.J."/>
        </authorList>
    </citation>
    <scope>FUNCTION</scope>
</reference>
<reference key="7">
    <citation type="journal article" date="2003" name="Nature">
        <title>Global analysis of protein expression in yeast.</title>
        <authorList>
            <person name="Ghaemmaghami S."/>
            <person name="Huh W.-K."/>
            <person name="Bower K."/>
            <person name="Howson R.W."/>
            <person name="Belle A."/>
            <person name="Dephoure N."/>
            <person name="O'Shea E.K."/>
            <person name="Weissman J.S."/>
        </authorList>
    </citation>
    <scope>LEVEL OF PROTEIN EXPRESSION [LARGE SCALE ANALYSIS]</scope>
</reference>
<reference key="8">
    <citation type="journal article" date="2005" name="Curr. Biol.">
        <title>Replication-independent histone deposition by the HIR complex and Asf1.</title>
        <authorList>
            <person name="Green E.M."/>
            <person name="Antczak A.J."/>
            <person name="Bailey A.O."/>
            <person name="Franco A.A."/>
            <person name="Wu K.J."/>
            <person name="Yates J.R. III"/>
            <person name="Kaufman P.D."/>
        </authorList>
    </citation>
    <scope>FUNCTION</scope>
    <scope>IDENTIFICATION BY MASS SPECTROMETRY</scope>
    <scope>IDENTIFICATION IN A COMPLEX WITH HIR1; HIR2 AND HIR3</scope>
    <scope>INTERACTION WITH ASF1</scope>
</reference>
<reference key="9">
    <citation type="journal article" date="2005" name="Genes Dev.">
        <title>The HIR corepressor complex binds to nucleosomes generating a distinct protein/DNA complex resistant to remodeling by SWI/SNF.</title>
        <authorList>
            <person name="Prochasson P."/>
            <person name="Florens L."/>
            <person name="Swanson S.K."/>
            <person name="Washburn M.P."/>
            <person name="Workman J.L."/>
        </authorList>
    </citation>
    <scope>FUNCTION</scope>
    <scope>IDENTIFICATION BY MASS SPECTROMETRY</scope>
    <scope>IDENTIFICATION IN A COMPLEX WITH HIR1; HIR2 AND HIR3</scope>
</reference>
<reference key="10">
    <citation type="journal article" date="2007" name="J. Proteome Res.">
        <title>Large-scale phosphorylation analysis of alpha-factor-arrested Saccharomyces cerevisiae.</title>
        <authorList>
            <person name="Li X."/>
            <person name="Gerber S.A."/>
            <person name="Rudner A.D."/>
            <person name="Beausoleil S.A."/>
            <person name="Haas W."/>
            <person name="Villen J."/>
            <person name="Elias J.E."/>
            <person name="Gygi S.P."/>
        </authorList>
    </citation>
    <scope>IDENTIFICATION BY MASS SPECTROMETRY [LARGE SCALE ANALYSIS]</scope>
    <source>
        <strain>ADR376</strain>
    </source>
</reference>
<reference key="11">
    <citation type="journal article" date="2008" name="Mol. Cell. Proteomics">
        <title>A multidimensional chromatography technology for in-depth phosphoproteome analysis.</title>
        <authorList>
            <person name="Albuquerque C.P."/>
            <person name="Smolka M.B."/>
            <person name="Payne S.H."/>
            <person name="Bafna V."/>
            <person name="Eng J."/>
            <person name="Zhou H."/>
        </authorList>
    </citation>
    <scope>PHOSPHORYLATION [LARGE SCALE ANALYSIS] AT SER-47; SER-49 AND SER-435</scope>
    <scope>IDENTIFICATION BY MASS SPECTROMETRY [LARGE SCALE ANALYSIS]</scope>
</reference>
<reference key="12">
    <citation type="journal article" date="2009" name="Mol. Cell">
        <title>Two-color cell array screen reveals interdependent roles for histone chaperones and a chromatin boundary regulator in histone gene repression.</title>
        <authorList>
            <person name="Fillingham J."/>
            <person name="Kainth P."/>
            <person name="Lambert J.P."/>
            <person name="van Bakel H."/>
            <person name="Tsui K."/>
            <person name="Pena-Castillo L."/>
            <person name="Nislow C."/>
            <person name="Figeys D."/>
            <person name="Hughes T.R."/>
            <person name="Greenblatt J."/>
            <person name="Andrews B.J."/>
        </authorList>
    </citation>
    <scope>INTERACTION WITH RTT106</scope>
    <scope>SUBCELLULAR LOCATION</scope>
    <scope>DISRUPTION PHENOTYPE</scope>
</reference>
<reference key="13">
    <citation type="journal article" date="2009" name="Science">
        <title>Global analysis of Cdk1 substrate phosphorylation sites provides insights into evolution.</title>
        <authorList>
            <person name="Holt L.J."/>
            <person name="Tuch B.B."/>
            <person name="Villen J."/>
            <person name="Johnson A.D."/>
            <person name="Gygi S.P."/>
            <person name="Morgan D.O."/>
        </authorList>
    </citation>
    <scope>PHOSPHORYLATION [LARGE SCALE ANALYSIS] AT SER-47</scope>
    <scope>IDENTIFICATION BY MASS SPECTROMETRY [LARGE SCALE ANALYSIS]</scope>
</reference>
<comment type="function">
    <text evidence="2 5 6">Component of the HIR complex, which functions as a histone chaperone that cooperates with ASF1 to promote replication-independent chromatin assembly. The HIR complex is also required for the periodic repression of three of the four histone gene loci during cell cycle as well as for autogenous regulation of the HTA1-HTB1 locus by H2A and H2B. DNA-binding by the HIR complex may repress transcription by inhibiting nucleosome remodeling by the SWI/SNF complex. The HIR complex may also be required for transcriptional silencing of centromeric, telomeric and mating-type loci in the absence of CAF-1.</text>
</comment>
<comment type="subunit">
    <text evidence="5 6 7">Component of the HIR complex, composed of HIR1, HIR2, HIR3 and HPC2 (PubMed:16264190, PubMed:16303565). This complex may consist of one copy of HIR1 and HIR3 and two copies of HIR2 and HPC2 (PubMed:16264190). The HIR complex interacts with ASF1 (PubMed:16303565). Interacts with RTT106 (PubMed:19683497).</text>
</comment>
<comment type="interaction">
    <interactant intactId="EBI-8520">
        <id>Q01448</id>
    </interactant>
    <interactant intactId="EBI-8316">
        <id>P32479</id>
        <label>HIR1</label>
    </interactant>
    <organismsDiffer>false</organismsDiffer>
    <experiments>7</experiments>
</comment>
<comment type="subcellular location">
    <subcellularLocation>
        <location evidence="3">Nucleus</location>
    </subcellularLocation>
    <subcellularLocation>
        <location evidence="7">Chromosome</location>
    </subcellularLocation>
    <text evidence="7">Localizes to the promoter region of histones HTA1-HTB1.</text>
</comment>
<comment type="disruption phenotype">
    <text evidence="7">Abolishes localization of HIR1 and RTT106 to the HTA1-HTB1 promoter.</text>
</comment>
<comment type="miscellaneous">
    <text evidence="4">Present with 238 molecules/cell in log phase SD medium.</text>
</comment>
<comment type="similarity">
    <text evidence="8">Belongs to the HPC2 family.</text>
</comment>
<comment type="sequence caution" evidence="8">
    <conflict type="erroneous gene model prediction">
        <sequence resource="EMBL-CDS" id="AAA34684"/>
    </conflict>
</comment>
<comment type="sequence caution" evidence="8">
    <conflict type="erroneous gene model prediction">
        <sequence resource="EMBL-CDS" id="CAA85179"/>
    </conflict>
</comment>
<feature type="chain" id="PRO_0000084039" description="Histone promoter control protein 2">
    <location>
        <begin position="1"/>
        <end position="625"/>
    </location>
</feature>
<feature type="region of interest" description="Disordered" evidence="1">
    <location>
        <begin position="1"/>
        <end position="164"/>
    </location>
</feature>
<feature type="region of interest" description="Disordered" evidence="1">
    <location>
        <begin position="295"/>
        <end position="437"/>
    </location>
</feature>
<feature type="compositionally biased region" description="Low complexity" evidence="1">
    <location>
        <begin position="11"/>
        <end position="28"/>
    </location>
</feature>
<feature type="compositionally biased region" description="Polar residues" evidence="1">
    <location>
        <begin position="29"/>
        <end position="39"/>
    </location>
</feature>
<feature type="compositionally biased region" description="Low complexity" evidence="1">
    <location>
        <begin position="83"/>
        <end position="105"/>
    </location>
</feature>
<feature type="compositionally biased region" description="Polar residues" evidence="1">
    <location>
        <begin position="113"/>
        <end position="135"/>
    </location>
</feature>
<feature type="compositionally biased region" description="Basic and acidic residues" evidence="1">
    <location>
        <begin position="136"/>
        <end position="154"/>
    </location>
</feature>
<feature type="compositionally biased region" description="Polar residues" evidence="1">
    <location>
        <begin position="155"/>
        <end position="164"/>
    </location>
</feature>
<feature type="compositionally biased region" description="Low complexity" evidence="1">
    <location>
        <begin position="305"/>
        <end position="321"/>
    </location>
</feature>
<feature type="compositionally biased region" description="Low complexity" evidence="1">
    <location>
        <begin position="330"/>
        <end position="355"/>
    </location>
</feature>
<feature type="compositionally biased region" description="Polar residues" evidence="1">
    <location>
        <begin position="363"/>
        <end position="381"/>
    </location>
</feature>
<feature type="compositionally biased region" description="Polar residues" evidence="1">
    <location>
        <begin position="404"/>
        <end position="415"/>
    </location>
</feature>
<feature type="modified residue" description="Phosphoserine" evidence="9 10">
    <location>
        <position position="47"/>
    </location>
</feature>
<feature type="modified residue" description="Phosphoserine" evidence="9">
    <location>
        <position position="49"/>
    </location>
</feature>
<feature type="modified residue" description="Phosphoserine" evidence="9">
    <location>
        <position position="435"/>
    </location>
</feature>
<feature type="strand" evidence="11">
    <location>
        <begin position="438"/>
        <end position="443"/>
    </location>
</feature>
<feature type="strand" evidence="11">
    <location>
        <begin position="446"/>
        <end position="449"/>
    </location>
</feature>
<feature type="strand" evidence="11">
    <location>
        <begin position="451"/>
        <end position="455"/>
    </location>
</feature>
<feature type="turn" evidence="11">
    <location>
        <begin position="461"/>
        <end position="463"/>
    </location>
</feature>
<feature type="strand" evidence="11">
    <location>
        <begin position="474"/>
        <end position="476"/>
    </location>
</feature>
<feature type="helix" evidence="11">
    <location>
        <begin position="477"/>
        <end position="485"/>
    </location>
</feature>
<feature type="helix" evidence="11">
    <location>
        <begin position="492"/>
        <end position="507"/>
    </location>
</feature>
<feature type="strand" evidence="11">
    <location>
        <begin position="566"/>
        <end position="568"/>
    </location>
</feature>
<feature type="helix" evidence="11">
    <location>
        <begin position="578"/>
        <end position="589"/>
    </location>
</feature>
<feature type="strand" evidence="11">
    <location>
        <begin position="595"/>
        <end position="599"/>
    </location>
</feature>
<keyword id="KW-0002">3D-structure</keyword>
<keyword id="KW-0156">Chromatin regulator</keyword>
<keyword id="KW-0158">Chromosome</keyword>
<keyword id="KW-0539">Nucleus</keyword>
<keyword id="KW-0597">Phosphoprotein</keyword>
<keyword id="KW-1185">Reference proteome</keyword>
<keyword id="KW-0678">Repressor</keyword>
<keyword id="KW-0804">Transcription</keyword>
<keyword id="KW-0805">Transcription regulation</keyword>
<accession>Q01448</accession>
<accession>A2TBP6</accession>
<accession>D6VQL1</accession>
<evidence type="ECO:0000256" key="1">
    <source>
        <dbReference type="SAM" id="MobiDB-lite"/>
    </source>
</evidence>
<evidence type="ECO:0000269" key="2">
    <source>
    </source>
</evidence>
<evidence type="ECO:0000269" key="3">
    <source>
    </source>
</evidence>
<evidence type="ECO:0000269" key="4">
    <source>
    </source>
</evidence>
<evidence type="ECO:0000269" key="5">
    <source>
    </source>
</evidence>
<evidence type="ECO:0000269" key="6">
    <source>
    </source>
</evidence>
<evidence type="ECO:0000269" key="7">
    <source>
    </source>
</evidence>
<evidence type="ECO:0000305" key="8"/>
<evidence type="ECO:0007744" key="9">
    <source>
    </source>
</evidence>
<evidence type="ECO:0007744" key="10">
    <source>
    </source>
</evidence>
<evidence type="ECO:0007829" key="11">
    <source>
        <dbReference type="PDB" id="8GHN"/>
    </source>
</evidence>
<gene>
    <name type="primary">HPC2</name>
    <name type="ordered locus">YBR215W</name>
    <name type="ORF">YBR1503</name>
</gene>
<dbReference type="EMBL" id="M94207">
    <property type="protein sequence ID" value="AAA34684.1"/>
    <property type="status" value="ALT_SEQ"/>
    <property type="molecule type" value="Genomic_DNA"/>
</dbReference>
<dbReference type="EMBL" id="Z36084">
    <property type="protein sequence ID" value="CAA85179.1"/>
    <property type="status" value="ALT_SEQ"/>
    <property type="molecule type" value="Genomic_DNA"/>
</dbReference>
<dbReference type="EMBL" id="EF123149">
    <property type="protein sequence ID" value="ABM97493.1"/>
    <property type="molecule type" value="mRNA"/>
</dbReference>
<dbReference type="EMBL" id="BK006936">
    <property type="protein sequence ID" value="DAA07331.1"/>
    <property type="molecule type" value="Genomic_DNA"/>
</dbReference>
<dbReference type="PIR" id="A48123">
    <property type="entry name" value="A48123"/>
</dbReference>
<dbReference type="RefSeq" id="NP_009774.4">
    <property type="nucleotide sequence ID" value="NM_001178563.3"/>
</dbReference>
<dbReference type="PDB" id="8GHA">
    <property type="method" value="EM"/>
    <property type="resolution" value="6.80 A"/>
    <property type="chains" value="E=1-625"/>
</dbReference>
<dbReference type="PDB" id="8GHM">
    <property type="method" value="EM"/>
    <property type="resolution" value="12.00 A"/>
    <property type="chains" value="F/L=1-625"/>
</dbReference>
<dbReference type="PDB" id="8GHN">
    <property type="method" value="EM"/>
    <property type="resolution" value="2.96 A"/>
    <property type="chains" value="E/F/K/L=1-625"/>
</dbReference>
<dbReference type="PDBsum" id="8GHA"/>
<dbReference type="PDBsum" id="8GHM"/>
<dbReference type="PDBsum" id="8GHN"/>
<dbReference type="SMR" id="Q01448"/>
<dbReference type="BioGRID" id="32912">
    <property type="interactions" value="326"/>
</dbReference>
<dbReference type="ComplexPortal" id="CPX-124">
    <property type="entry name" value="HIR complex"/>
</dbReference>
<dbReference type="DIP" id="DIP-4587N"/>
<dbReference type="FunCoup" id="Q01448">
    <property type="interactions" value="212"/>
</dbReference>
<dbReference type="IntAct" id="Q01448">
    <property type="interactions" value="10"/>
</dbReference>
<dbReference type="MINT" id="Q01448"/>
<dbReference type="STRING" id="4932.YBR215W"/>
<dbReference type="CarbonylDB" id="Q01448"/>
<dbReference type="iPTMnet" id="Q01448"/>
<dbReference type="PaxDb" id="4932-YBR215W"/>
<dbReference type="PeptideAtlas" id="Q01448"/>
<dbReference type="EnsemblFungi" id="YBR215W_mRNA">
    <property type="protein sequence ID" value="YBR215W"/>
    <property type="gene ID" value="YBR215W"/>
</dbReference>
<dbReference type="GeneID" id="852516"/>
<dbReference type="KEGG" id="sce:YBR215W"/>
<dbReference type="AGR" id="SGD:S000000419"/>
<dbReference type="SGD" id="S000000419">
    <property type="gene designation" value="HPC2"/>
</dbReference>
<dbReference type="VEuPathDB" id="FungiDB:YBR215W"/>
<dbReference type="eggNOG" id="ENOG502RG9A">
    <property type="taxonomic scope" value="Eukaryota"/>
</dbReference>
<dbReference type="HOGENOM" id="CLU_023932_0_0_1"/>
<dbReference type="InParanoid" id="Q01448"/>
<dbReference type="OMA" id="HINDTNG"/>
<dbReference type="OrthoDB" id="5576775at2759"/>
<dbReference type="BioCyc" id="YEAST:G3O-29152-MONOMER"/>
<dbReference type="Reactome" id="R-SCE-2559584">
    <property type="pathway name" value="Formation of Senescence-Associated Heterochromatin Foci (SAHF)"/>
</dbReference>
<dbReference type="BioGRID-ORCS" id="852516">
    <property type="hits" value="2 hits in 10 CRISPR screens"/>
</dbReference>
<dbReference type="PRO" id="PR:Q01448"/>
<dbReference type="Proteomes" id="UP000002311">
    <property type="component" value="Chromosome II"/>
</dbReference>
<dbReference type="RNAct" id="Q01448">
    <property type="molecule type" value="protein"/>
</dbReference>
<dbReference type="GO" id="GO:0005694">
    <property type="term" value="C:chromosome"/>
    <property type="evidence" value="ECO:0007669"/>
    <property type="project" value="UniProtKB-SubCell"/>
</dbReference>
<dbReference type="GO" id="GO:0000417">
    <property type="term" value="C:HIR complex"/>
    <property type="evidence" value="ECO:0000314"/>
    <property type="project" value="SGD"/>
</dbReference>
<dbReference type="GO" id="GO:0005634">
    <property type="term" value="C:nucleus"/>
    <property type="evidence" value="ECO:0007005"/>
    <property type="project" value="SGD"/>
</dbReference>
<dbReference type="GO" id="GO:0006325">
    <property type="term" value="P:chromatin organization"/>
    <property type="evidence" value="ECO:0000314"/>
    <property type="project" value="SGD"/>
</dbReference>
<dbReference type="GO" id="GO:0000082">
    <property type="term" value="P:G1/S transition of mitotic cell cycle"/>
    <property type="evidence" value="ECO:0000315"/>
    <property type="project" value="SGD"/>
</dbReference>
<dbReference type="GO" id="GO:1905268">
    <property type="term" value="P:negative regulation of chromatin organization"/>
    <property type="evidence" value="ECO:0000314"/>
    <property type="project" value="ComplexPortal"/>
</dbReference>
<dbReference type="GO" id="GO:0006334">
    <property type="term" value="P:nucleosome assembly"/>
    <property type="evidence" value="ECO:0000314"/>
    <property type="project" value="ComplexPortal"/>
</dbReference>
<dbReference type="GO" id="GO:0006357">
    <property type="term" value="P:regulation of transcription by RNA polymerase II"/>
    <property type="evidence" value="ECO:0000315"/>
    <property type="project" value="SGD"/>
</dbReference>
<dbReference type="GO" id="GO:0006368">
    <property type="term" value="P:transcription elongation by RNA polymerase II"/>
    <property type="evidence" value="ECO:0000316"/>
    <property type="project" value="SGD"/>
</dbReference>
<dbReference type="InterPro" id="IPR014840">
    <property type="entry name" value="HRD"/>
</dbReference>
<dbReference type="Pfam" id="PF08729">
    <property type="entry name" value="HUN"/>
    <property type="match status" value="1"/>
</dbReference>
<proteinExistence type="evidence at protein level"/>
<organism>
    <name type="scientific">Saccharomyces cerevisiae (strain ATCC 204508 / S288c)</name>
    <name type="common">Baker's yeast</name>
    <dbReference type="NCBI Taxonomy" id="559292"/>
    <lineage>
        <taxon>Eukaryota</taxon>
        <taxon>Fungi</taxon>
        <taxon>Dikarya</taxon>
        <taxon>Ascomycota</taxon>
        <taxon>Saccharomycotina</taxon>
        <taxon>Saccharomycetes</taxon>
        <taxon>Saccharomycetales</taxon>
        <taxon>Saccharomycetaceae</taxon>
        <taxon>Saccharomyces</taxon>
    </lineage>
</organism>